<sequence>MGYVRWLGHAAFEISIDGYTVLIDPWLTNPLSPVKVEDYRDKVDLIIVTHDHGDHLGESVELLRINRRARFVAVYELANYVAEQLGGATDRVIGANIGGPVRIPDINLKVMFFPATHSSSRGTPTGVLIVGKETSIYHAGDTGLAAEMALVGELYSPKIALVPIGGHFTMDAYQAAKAIEMLRAKVVIPMHYNTFPVIRADPEELKRYVDEFKLDAKVVVLKPGELYQF</sequence>
<keyword id="KW-0378">Hydrolase</keyword>
<keyword id="KW-1185">Reference proteome</keyword>
<comment type="similarity">
    <text evidence="1">Belongs to the UPF0173 family.</text>
</comment>
<reference key="1">
    <citation type="journal article" date="2007" name="Archaea">
        <title>The genome of Hyperthermus butylicus: a sulfur-reducing, peptide fermenting, neutrophilic Crenarchaeote growing up to 108 degrees C.</title>
        <authorList>
            <person name="Bruegger K."/>
            <person name="Chen L."/>
            <person name="Stark M."/>
            <person name="Zibat A."/>
            <person name="Redder P."/>
            <person name="Ruepp A."/>
            <person name="Awayez M."/>
            <person name="She Q."/>
            <person name="Garrett R.A."/>
            <person name="Klenk H.-P."/>
        </authorList>
    </citation>
    <scope>NUCLEOTIDE SEQUENCE [LARGE SCALE GENOMIC DNA]</scope>
    <source>
        <strain>DSM 5456 / JCM 9403 / PLM1-5</strain>
    </source>
</reference>
<evidence type="ECO:0000255" key="1">
    <source>
        <dbReference type="HAMAP-Rule" id="MF_00457"/>
    </source>
</evidence>
<proteinExistence type="inferred from homology"/>
<feature type="chain" id="PRO_1000013504" description="UPF0173 metal-dependent hydrolase Hbut_0886">
    <location>
        <begin position="1"/>
        <end position="229"/>
    </location>
</feature>
<name>Y886_HYPBU</name>
<accession>A2BL74</accession>
<organism>
    <name type="scientific">Hyperthermus butylicus (strain DSM 5456 / JCM 9403 / PLM1-5)</name>
    <dbReference type="NCBI Taxonomy" id="415426"/>
    <lineage>
        <taxon>Archaea</taxon>
        <taxon>Thermoproteota</taxon>
        <taxon>Thermoprotei</taxon>
        <taxon>Desulfurococcales</taxon>
        <taxon>Pyrodictiaceae</taxon>
        <taxon>Hyperthermus</taxon>
    </lineage>
</organism>
<gene>
    <name type="ordered locus">Hbut_0886</name>
</gene>
<protein>
    <recommendedName>
        <fullName evidence="1">UPF0173 metal-dependent hydrolase Hbut_0886</fullName>
    </recommendedName>
</protein>
<dbReference type="EMBL" id="CP000493">
    <property type="protein sequence ID" value="ABM80735.1"/>
    <property type="molecule type" value="Genomic_DNA"/>
</dbReference>
<dbReference type="RefSeq" id="WP_011822053.1">
    <property type="nucleotide sequence ID" value="NC_008818.1"/>
</dbReference>
<dbReference type="SMR" id="A2BL74"/>
<dbReference type="STRING" id="415426.Hbut_0886"/>
<dbReference type="EnsemblBacteria" id="ABM80735">
    <property type="protein sequence ID" value="ABM80735"/>
    <property type="gene ID" value="Hbut_0886"/>
</dbReference>
<dbReference type="GeneID" id="4782563"/>
<dbReference type="KEGG" id="hbu:Hbut_0886"/>
<dbReference type="eggNOG" id="arCOG00497">
    <property type="taxonomic scope" value="Archaea"/>
</dbReference>
<dbReference type="HOGENOM" id="CLU_070010_4_0_2"/>
<dbReference type="OrthoDB" id="28313at2157"/>
<dbReference type="Proteomes" id="UP000002593">
    <property type="component" value="Chromosome"/>
</dbReference>
<dbReference type="GO" id="GO:0016787">
    <property type="term" value="F:hydrolase activity"/>
    <property type="evidence" value="ECO:0007669"/>
    <property type="project" value="UniProtKB-UniRule"/>
</dbReference>
<dbReference type="Gene3D" id="3.60.15.10">
    <property type="entry name" value="Ribonuclease Z/Hydroxyacylglutathione hydrolase-like"/>
    <property type="match status" value="1"/>
</dbReference>
<dbReference type="HAMAP" id="MF_00457">
    <property type="entry name" value="UPF0173"/>
    <property type="match status" value="1"/>
</dbReference>
<dbReference type="InterPro" id="IPR001279">
    <property type="entry name" value="Metallo-B-lactamas"/>
</dbReference>
<dbReference type="InterPro" id="IPR036866">
    <property type="entry name" value="RibonucZ/Hydroxyglut_hydro"/>
</dbReference>
<dbReference type="InterPro" id="IPR022877">
    <property type="entry name" value="UPF0173"/>
</dbReference>
<dbReference type="InterPro" id="IPR050114">
    <property type="entry name" value="UPF0173_UPF0282_UlaG_hydrolase"/>
</dbReference>
<dbReference type="NCBIfam" id="NF001911">
    <property type="entry name" value="PRK00685.1"/>
    <property type="match status" value="1"/>
</dbReference>
<dbReference type="PANTHER" id="PTHR43546:SF3">
    <property type="entry name" value="UPF0173 METAL-DEPENDENT HYDROLASE MJ1163"/>
    <property type="match status" value="1"/>
</dbReference>
<dbReference type="PANTHER" id="PTHR43546">
    <property type="entry name" value="UPF0173 METAL-DEPENDENT HYDROLASE MJ1163-RELATED"/>
    <property type="match status" value="1"/>
</dbReference>
<dbReference type="Pfam" id="PF12706">
    <property type="entry name" value="Lactamase_B_2"/>
    <property type="match status" value="1"/>
</dbReference>
<dbReference type="SMART" id="SM00849">
    <property type="entry name" value="Lactamase_B"/>
    <property type="match status" value="1"/>
</dbReference>
<dbReference type="SUPFAM" id="SSF56281">
    <property type="entry name" value="Metallo-hydrolase/oxidoreductase"/>
    <property type="match status" value="1"/>
</dbReference>